<evidence type="ECO:0000255" key="1">
    <source>
        <dbReference type="HAMAP-Rule" id="MF_00130"/>
    </source>
</evidence>
<sequence length="202" mass="23308">MVNYPHNPICQKVTPLQKQQKHRQVDFANRGMSFEAAINATNAYYLAKGIAVIHKKPTPIQIVKVDYPRRSRAKIVEAYFKQASTTDYSGIYKGHYIDFEAKETRQKTAMPMKNFHAHQIEHMAAVLKQKGICFVLLHFATLKETYYLPAKALIDFYQIDRGNKSMPLDYIRKNGFEVKLGAFPQVPYLDIIEQKFLGGDYN</sequence>
<organism>
    <name type="scientific">Streptococcus equi subsp. zooepidemicus (strain H70)</name>
    <dbReference type="NCBI Taxonomy" id="553483"/>
    <lineage>
        <taxon>Bacteria</taxon>
        <taxon>Bacillati</taxon>
        <taxon>Bacillota</taxon>
        <taxon>Bacilli</taxon>
        <taxon>Lactobacillales</taxon>
        <taxon>Streptococcaceae</taxon>
        <taxon>Streptococcus</taxon>
    </lineage>
</organism>
<name>RECU_STRS7</name>
<feature type="chain" id="PRO_1000203174" description="Holliday junction resolvase RecU">
    <location>
        <begin position="1"/>
        <end position="202"/>
    </location>
</feature>
<feature type="binding site" evidence="1">
    <location>
        <position position="85"/>
    </location>
    <ligand>
        <name>Mg(2+)</name>
        <dbReference type="ChEBI" id="CHEBI:18420"/>
    </ligand>
</feature>
<feature type="binding site" evidence="1">
    <location>
        <position position="87"/>
    </location>
    <ligand>
        <name>Mg(2+)</name>
        <dbReference type="ChEBI" id="CHEBI:18420"/>
    </ligand>
</feature>
<feature type="binding site" evidence="1">
    <location>
        <position position="100"/>
    </location>
    <ligand>
        <name>Mg(2+)</name>
        <dbReference type="ChEBI" id="CHEBI:18420"/>
    </ligand>
</feature>
<feature type="binding site" evidence="1">
    <location>
        <position position="119"/>
    </location>
    <ligand>
        <name>Mg(2+)</name>
        <dbReference type="ChEBI" id="CHEBI:18420"/>
    </ligand>
</feature>
<feature type="site" description="Transition state stabilizer" evidence="1">
    <location>
        <position position="102"/>
    </location>
</feature>
<dbReference type="EC" id="3.1.21.10" evidence="1"/>
<dbReference type="EMBL" id="FM204884">
    <property type="protein sequence ID" value="CAW98275.1"/>
    <property type="molecule type" value="Genomic_DNA"/>
</dbReference>
<dbReference type="SMR" id="C0MGX4"/>
<dbReference type="KEGG" id="seq:SZO_03960"/>
<dbReference type="PATRIC" id="fig|40041.11.peg.420"/>
<dbReference type="eggNOG" id="COG3331">
    <property type="taxonomic scope" value="Bacteria"/>
</dbReference>
<dbReference type="HOGENOM" id="CLU_096340_0_0_9"/>
<dbReference type="Proteomes" id="UP000001368">
    <property type="component" value="Chromosome"/>
</dbReference>
<dbReference type="GO" id="GO:0005737">
    <property type="term" value="C:cytoplasm"/>
    <property type="evidence" value="ECO:0007669"/>
    <property type="project" value="UniProtKB-SubCell"/>
</dbReference>
<dbReference type="GO" id="GO:0004519">
    <property type="term" value="F:endonuclease activity"/>
    <property type="evidence" value="ECO:0007669"/>
    <property type="project" value="UniProtKB-UniRule"/>
</dbReference>
<dbReference type="GO" id="GO:0000287">
    <property type="term" value="F:magnesium ion binding"/>
    <property type="evidence" value="ECO:0007669"/>
    <property type="project" value="UniProtKB-UniRule"/>
</dbReference>
<dbReference type="GO" id="GO:0003676">
    <property type="term" value="F:nucleic acid binding"/>
    <property type="evidence" value="ECO:0007669"/>
    <property type="project" value="InterPro"/>
</dbReference>
<dbReference type="GO" id="GO:0007059">
    <property type="term" value="P:chromosome segregation"/>
    <property type="evidence" value="ECO:0007669"/>
    <property type="project" value="UniProtKB-UniRule"/>
</dbReference>
<dbReference type="GO" id="GO:0006310">
    <property type="term" value="P:DNA recombination"/>
    <property type="evidence" value="ECO:0007669"/>
    <property type="project" value="UniProtKB-UniRule"/>
</dbReference>
<dbReference type="GO" id="GO:0006281">
    <property type="term" value="P:DNA repair"/>
    <property type="evidence" value="ECO:0007669"/>
    <property type="project" value="UniProtKB-UniRule"/>
</dbReference>
<dbReference type="CDD" id="cd22354">
    <property type="entry name" value="RecU-like"/>
    <property type="match status" value="1"/>
</dbReference>
<dbReference type="Gene3D" id="3.40.1350.10">
    <property type="match status" value="1"/>
</dbReference>
<dbReference type="HAMAP" id="MF_00130">
    <property type="entry name" value="RecU"/>
    <property type="match status" value="1"/>
</dbReference>
<dbReference type="InterPro" id="IPR004612">
    <property type="entry name" value="Resolv_RecU"/>
</dbReference>
<dbReference type="InterPro" id="IPR011335">
    <property type="entry name" value="Restrct_endonuc-II-like"/>
</dbReference>
<dbReference type="InterPro" id="IPR011856">
    <property type="entry name" value="tRNA_endonuc-like_dom_sf"/>
</dbReference>
<dbReference type="NCBIfam" id="NF002580">
    <property type="entry name" value="PRK02234.1-1"/>
    <property type="match status" value="1"/>
</dbReference>
<dbReference type="NCBIfam" id="NF002584">
    <property type="entry name" value="PRK02234.1-5"/>
    <property type="match status" value="1"/>
</dbReference>
<dbReference type="NCBIfam" id="TIGR00648">
    <property type="entry name" value="recU"/>
    <property type="match status" value="1"/>
</dbReference>
<dbReference type="Pfam" id="PF03838">
    <property type="entry name" value="RecU"/>
    <property type="match status" value="1"/>
</dbReference>
<dbReference type="PIRSF" id="PIRSF037785">
    <property type="entry name" value="RecU"/>
    <property type="match status" value="1"/>
</dbReference>
<dbReference type="SUPFAM" id="SSF52980">
    <property type="entry name" value="Restriction endonuclease-like"/>
    <property type="match status" value="1"/>
</dbReference>
<keyword id="KW-0963">Cytoplasm</keyword>
<keyword id="KW-0227">DNA damage</keyword>
<keyword id="KW-0233">DNA recombination</keyword>
<keyword id="KW-0234">DNA repair</keyword>
<keyword id="KW-0255">Endonuclease</keyword>
<keyword id="KW-0378">Hydrolase</keyword>
<keyword id="KW-0460">Magnesium</keyword>
<keyword id="KW-0479">Metal-binding</keyword>
<keyword id="KW-0540">Nuclease</keyword>
<reference key="1">
    <citation type="journal article" date="2009" name="PLoS Pathog.">
        <title>Genomic evidence for the evolution of Streptococcus equi: host restriction, increased virulence, and genetic exchange with human pathogens.</title>
        <authorList>
            <person name="Holden M.T.G."/>
            <person name="Heather Z."/>
            <person name="Paillot R."/>
            <person name="Steward K.F."/>
            <person name="Webb K."/>
            <person name="Ainslie F."/>
            <person name="Jourdan T."/>
            <person name="Bason N.C."/>
            <person name="Holroyd N.E."/>
            <person name="Mungall K."/>
            <person name="Quail M.A."/>
            <person name="Sanders M."/>
            <person name="Simmonds M."/>
            <person name="Willey D."/>
            <person name="Brooks K."/>
            <person name="Aanensen D.M."/>
            <person name="Spratt B.G."/>
            <person name="Jolley K.A."/>
            <person name="Maiden M.C.J."/>
            <person name="Kehoe M."/>
            <person name="Chanter N."/>
            <person name="Bentley S.D."/>
            <person name="Robinson C."/>
            <person name="Maskell D.J."/>
            <person name="Parkhill J."/>
            <person name="Waller A.S."/>
        </authorList>
    </citation>
    <scope>NUCLEOTIDE SEQUENCE [LARGE SCALE GENOMIC DNA]</scope>
    <source>
        <strain>H70</strain>
    </source>
</reference>
<accession>C0MGX4</accession>
<comment type="function">
    <text evidence="1">Endonuclease that resolves Holliday junction intermediates in genetic recombination. Cleaves mobile four-strand junctions by introducing symmetrical nicks in paired strands. Promotes annealing of linear ssDNA with homologous dsDNA. Required for DNA repair, homologous recombination and chromosome segregation.</text>
</comment>
<comment type="catalytic activity">
    <reaction evidence="1">
        <text>Endonucleolytic cleavage at a junction such as a reciprocal single-stranded crossover between two homologous DNA duplexes (Holliday junction).</text>
        <dbReference type="EC" id="3.1.21.10"/>
    </reaction>
</comment>
<comment type="cofactor">
    <cofactor evidence="1">
        <name>Mg(2+)</name>
        <dbReference type="ChEBI" id="CHEBI:18420"/>
    </cofactor>
    <text evidence="1">Binds 1 Mg(2+) ion per subunit.</text>
</comment>
<comment type="subcellular location">
    <subcellularLocation>
        <location evidence="1">Cytoplasm</location>
    </subcellularLocation>
</comment>
<comment type="similarity">
    <text evidence="1">Belongs to the RecU family.</text>
</comment>
<gene>
    <name evidence="1" type="primary">recU</name>
    <name type="ordered locus">SZO_03960</name>
</gene>
<proteinExistence type="inferred from homology"/>
<protein>
    <recommendedName>
        <fullName evidence="1">Holliday junction resolvase RecU</fullName>
        <ecNumber evidence="1">3.1.21.10</ecNumber>
    </recommendedName>
    <alternativeName>
        <fullName evidence="1">Recombination protein U homolog</fullName>
    </alternativeName>
</protein>